<proteinExistence type="evidence at protein level"/>
<feature type="chain" id="PRO_0000139233" description="Methionine--tRNA ligase">
    <location>
        <begin position="1"/>
        <end position="519"/>
    </location>
</feature>
<feature type="region of interest" description="Disordered" evidence="3">
    <location>
        <begin position="500"/>
        <end position="519"/>
    </location>
</feature>
<feature type="short sequence motif" description="'HIGH' region" evidence="2">
    <location>
        <begin position="11"/>
        <end position="21"/>
    </location>
</feature>
<feature type="short sequence motif" description="'KMSKS' region" evidence="2">
    <location>
        <begin position="299"/>
        <end position="303"/>
    </location>
</feature>
<feature type="binding site" evidence="1">
    <location>
        <position position="302"/>
    </location>
    <ligand>
        <name>ATP</name>
        <dbReference type="ChEBI" id="CHEBI:30616"/>
    </ligand>
</feature>
<feature type="strand" evidence="6">
    <location>
        <begin position="3"/>
        <end position="8"/>
    </location>
</feature>
<feature type="helix" evidence="6">
    <location>
        <begin position="19"/>
        <end position="37"/>
    </location>
</feature>
<feature type="strand" evidence="6">
    <location>
        <begin position="41"/>
        <end position="48"/>
    </location>
</feature>
<feature type="helix" evidence="6">
    <location>
        <begin position="53"/>
        <end position="62"/>
    </location>
</feature>
<feature type="helix" evidence="6">
    <location>
        <begin position="66"/>
        <end position="83"/>
    </location>
</feature>
<feature type="strand" evidence="6">
    <location>
        <begin position="89"/>
        <end position="93"/>
    </location>
</feature>
<feature type="helix" evidence="6">
    <location>
        <begin position="97"/>
        <end position="112"/>
    </location>
</feature>
<feature type="strand" evidence="6">
    <location>
        <begin position="116"/>
        <end position="126"/>
    </location>
</feature>
<feature type="turn" evidence="6">
    <location>
        <begin position="127"/>
        <end position="130"/>
    </location>
</feature>
<feature type="strand" evidence="6">
    <location>
        <begin position="131"/>
        <end position="133"/>
    </location>
</feature>
<feature type="helix" evidence="6">
    <location>
        <begin position="135"/>
        <end position="137"/>
    </location>
</feature>
<feature type="strand" evidence="6">
    <location>
        <begin position="138"/>
        <end position="140"/>
    </location>
</feature>
<feature type="strand" evidence="6">
    <location>
        <begin position="145"/>
        <end position="147"/>
    </location>
</feature>
<feature type="turn" evidence="6">
    <location>
        <begin position="148"/>
        <end position="150"/>
    </location>
</feature>
<feature type="strand" evidence="6">
    <location>
        <begin position="155"/>
        <end position="164"/>
    </location>
</feature>
<feature type="helix" evidence="6">
    <location>
        <begin position="166"/>
        <end position="169"/>
    </location>
</feature>
<feature type="helix" evidence="6">
    <location>
        <begin position="170"/>
        <end position="179"/>
    </location>
</feature>
<feature type="helix" evidence="6">
    <location>
        <begin position="181"/>
        <end position="183"/>
    </location>
</feature>
<feature type="strand" evidence="6">
    <location>
        <begin position="184"/>
        <end position="186"/>
    </location>
</feature>
<feature type="helix" evidence="6">
    <location>
        <begin position="187"/>
        <end position="198"/>
    </location>
</feature>
<feature type="strand" evidence="6">
    <location>
        <begin position="207"/>
        <end position="210"/>
    </location>
</feature>
<feature type="strand" evidence="6">
    <location>
        <begin position="220"/>
        <end position="225"/>
    </location>
</feature>
<feature type="helix" evidence="6">
    <location>
        <begin position="227"/>
        <end position="232"/>
    </location>
</feature>
<feature type="helix" evidence="6">
    <location>
        <begin position="234"/>
        <end position="237"/>
    </location>
</feature>
<feature type="turn" evidence="6">
    <location>
        <begin position="238"/>
        <end position="242"/>
    </location>
</feature>
<feature type="helix" evidence="6">
    <location>
        <begin position="247"/>
        <end position="252"/>
    </location>
</feature>
<feature type="strand" evidence="6">
    <location>
        <begin position="256"/>
        <end position="261"/>
    </location>
</feature>
<feature type="helix" evidence="6">
    <location>
        <begin position="262"/>
        <end position="264"/>
    </location>
</feature>
<feature type="helix" evidence="6">
    <location>
        <begin position="265"/>
        <end position="269"/>
    </location>
</feature>
<feature type="helix" evidence="6">
    <location>
        <begin position="271"/>
        <end position="278"/>
    </location>
</feature>
<feature type="strand" evidence="6">
    <location>
        <begin position="287"/>
        <end position="290"/>
    </location>
</feature>
<feature type="strand" evidence="6">
    <location>
        <begin position="293"/>
        <end position="297"/>
    </location>
</feature>
<feature type="helix" evidence="6">
    <location>
        <begin position="310"/>
        <end position="317"/>
    </location>
</feature>
<feature type="helix" evidence="6">
    <location>
        <begin position="319"/>
        <end position="329"/>
    </location>
</feature>
<feature type="helix" evidence="6">
    <location>
        <begin position="340"/>
        <end position="350"/>
    </location>
</feature>
<feature type="helix" evidence="6">
    <location>
        <begin position="351"/>
        <end position="355"/>
    </location>
</feature>
<feature type="helix" evidence="6">
    <location>
        <begin position="356"/>
        <end position="369"/>
    </location>
</feature>
<feature type="helix" evidence="6">
    <location>
        <begin position="382"/>
        <end position="392"/>
    </location>
</feature>
<feature type="helix" evidence="6">
    <location>
        <begin position="394"/>
        <end position="403"/>
    </location>
</feature>
<feature type="helix" evidence="6">
    <location>
        <begin position="407"/>
        <end position="428"/>
    </location>
</feature>
<feature type="helix" evidence="6">
    <location>
        <begin position="430"/>
        <end position="433"/>
    </location>
</feature>
<feature type="helix" evidence="6">
    <location>
        <begin position="439"/>
        <end position="463"/>
    </location>
</feature>
<feature type="turn" evidence="6">
    <location>
        <begin position="464"/>
        <end position="466"/>
    </location>
</feature>
<feature type="helix" evidence="6">
    <location>
        <begin position="468"/>
        <end position="477"/>
    </location>
</feature>
<feature type="helix" evidence="6">
    <location>
        <begin position="489"/>
        <end position="491"/>
    </location>
</feature>
<accession>P9WFU5</accession>
<accession>L0T8C8</accession>
<accession>O05593</accession>
<gene>
    <name evidence="2" type="primary">metG</name>
    <name type="synonym">metS</name>
    <name type="ordered locus">Rv1007c</name>
    <name type="ORF">MTCI237.24</name>
</gene>
<reference key="1">
    <citation type="journal article" date="1998" name="Nature">
        <title>Deciphering the biology of Mycobacterium tuberculosis from the complete genome sequence.</title>
        <authorList>
            <person name="Cole S.T."/>
            <person name="Brosch R."/>
            <person name="Parkhill J."/>
            <person name="Garnier T."/>
            <person name="Churcher C.M."/>
            <person name="Harris D.E."/>
            <person name="Gordon S.V."/>
            <person name="Eiglmeier K."/>
            <person name="Gas S."/>
            <person name="Barry C.E. III"/>
            <person name="Tekaia F."/>
            <person name="Badcock K."/>
            <person name="Basham D."/>
            <person name="Brown D."/>
            <person name="Chillingworth T."/>
            <person name="Connor R."/>
            <person name="Davies R.M."/>
            <person name="Devlin K."/>
            <person name="Feltwell T."/>
            <person name="Gentles S."/>
            <person name="Hamlin N."/>
            <person name="Holroyd S."/>
            <person name="Hornsby T."/>
            <person name="Jagels K."/>
            <person name="Krogh A."/>
            <person name="McLean J."/>
            <person name="Moule S."/>
            <person name="Murphy L.D."/>
            <person name="Oliver S."/>
            <person name="Osborne J."/>
            <person name="Quail M.A."/>
            <person name="Rajandream M.A."/>
            <person name="Rogers J."/>
            <person name="Rutter S."/>
            <person name="Seeger K."/>
            <person name="Skelton S."/>
            <person name="Squares S."/>
            <person name="Squares R."/>
            <person name="Sulston J.E."/>
            <person name="Taylor K."/>
            <person name="Whitehead S."/>
            <person name="Barrell B.G."/>
        </authorList>
    </citation>
    <scope>NUCLEOTIDE SEQUENCE [LARGE SCALE GENOMIC DNA]</scope>
    <source>
        <strain>ATCC 25618 / H37Rv</strain>
    </source>
</reference>
<reference key="2">
    <citation type="journal article" date="1998" name="FEBS Lett.">
        <title>Biochemical and phylogenetic analyses of methionyl-tRNA synthetase isolated from a pathogenic microorganism, Mycobacterium tuberculosis.</title>
        <authorList>
            <person name="Kim S."/>
            <person name="Jo Y.J."/>
            <person name="Lee S.H."/>
            <person name="Motegi H."/>
            <person name="Shiba K."/>
            <person name="Sassanfar M."/>
            <person name="Martinis S.A."/>
        </authorList>
    </citation>
    <scope>FUNCTION</scope>
    <scope>CATALYTIC ACTIVITY</scope>
    <scope>BIOPHYSICOCHEMICAL PROPERTIES</scope>
    <scope>SUBUNIT</scope>
    <scope>DOMAIN</scope>
</reference>
<reference key="3">
    <citation type="journal article" date="2011" name="Mol. Cell. Proteomics">
        <title>Proteogenomic analysis of Mycobacterium tuberculosis by high resolution mass spectrometry.</title>
        <authorList>
            <person name="Kelkar D.S."/>
            <person name="Kumar D."/>
            <person name="Kumar P."/>
            <person name="Balakrishnan L."/>
            <person name="Muthusamy B."/>
            <person name="Yadav A.K."/>
            <person name="Shrivastava P."/>
            <person name="Marimuthu A."/>
            <person name="Anand S."/>
            <person name="Sundaram H."/>
            <person name="Kingsbury R."/>
            <person name="Harsha H.C."/>
            <person name="Nair B."/>
            <person name="Prasad T.S."/>
            <person name="Chauhan D.S."/>
            <person name="Katoch K."/>
            <person name="Katoch V.M."/>
            <person name="Kumar P."/>
            <person name="Chaerkady R."/>
            <person name="Ramachandran S."/>
            <person name="Dash D."/>
            <person name="Pandey A."/>
        </authorList>
    </citation>
    <scope>IDENTIFICATION BY MASS SPECTROMETRY [LARGE SCALE ANALYSIS]</scope>
    <source>
        <strain>ATCC 25618 / H37Rv</strain>
    </source>
</reference>
<protein>
    <recommendedName>
        <fullName evidence="2">Methionine--tRNA ligase</fullName>
        <ecNumber evidence="2 4">6.1.1.10</ecNumber>
    </recommendedName>
    <alternativeName>
        <fullName evidence="2 5">Methionyl-tRNA synthetase</fullName>
        <shortName evidence="2 5">MetRS</shortName>
    </alternativeName>
</protein>
<dbReference type="EC" id="6.1.1.10" evidence="2 4"/>
<dbReference type="EMBL" id="AL123456">
    <property type="protein sequence ID" value="CCP43757.1"/>
    <property type="molecule type" value="Genomic_DNA"/>
</dbReference>
<dbReference type="PIR" id="B70603">
    <property type="entry name" value="B70603"/>
</dbReference>
<dbReference type="RefSeq" id="NP_215523.1">
    <property type="nucleotide sequence ID" value="NC_000962.3"/>
</dbReference>
<dbReference type="RefSeq" id="WP_003911321.1">
    <property type="nucleotide sequence ID" value="NZ_NVQJ01000018.1"/>
</dbReference>
<dbReference type="PDB" id="6AX8">
    <property type="method" value="X-ray"/>
    <property type="resolution" value="2.60 A"/>
    <property type="chains" value="A=1-519"/>
</dbReference>
<dbReference type="PDBsum" id="6AX8"/>
<dbReference type="SMR" id="P9WFU5"/>
<dbReference type="FunCoup" id="P9WFU5">
    <property type="interactions" value="457"/>
</dbReference>
<dbReference type="STRING" id="83332.Rv1007c"/>
<dbReference type="PaxDb" id="83332-Rv1007c"/>
<dbReference type="DNASU" id="886050"/>
<dbReference type="GeneID" id="886050"/>
<dbReference type="KEGG" id="mtu:Rv1007c"/>
<dbReference type="KEGG" id="mtv:RVBD_1007c"/>
<dbReference type="TubercuList" id="Rv1007c"/>
<dbReference type="eggNOG" id="COG0143">
    <property type="taxonomic scope" value="Bacteria"/>
</dbReference>
<dbReference type="InParanoid" id="P9WFU5"/>
<dbReference type="OrthoDB" id="9810191at2"/>
<dbReference type="PhylomeDB" id="P9WFU5"/>
<dbReference type="Proteomes" id="UP000001584">
    <property type="component" value="Chromosome"/>
</dbReference>
<dbReference type="GO" id="GO:0005737">
    <property type="term" value="C:cytoplasm"/>
    <property type="evidence" value="ECO:0007669"/>
    <property type="project" value="UniProtKB-SubCell"/>
</dbReference>
<dbReference type="GO" id="GO:0005886">
    <property type="term" value="C:plasma membrane"/>
    <property type="evidence" value="ECO:0007005"/>
    <property type="project" value="MTBBASE"/>
</dbReference>
<dbReference type="GO" id="GO:0005524">
    <property type="term" value="F:ATP binding"/>
    <property type="evidence" value="ECO:0007669"/>
    <property type="project" value="UniProtKB-UniRule"/>
</dbReference>
<dbReference type="GO" id="GO:0004825">
    <property type="term" value="F:methionine-tRNA ligase activity"/>
    <property type="evidence" value="ECO:0000314"/>
    <property type="project" value="MTBBASE"/>
</dbReference>
<dbReference type="GO" id="GO:0006431">
    <property type="term" value="P:methionyl-tRNA aminoacylation"/>
    <property type="evidence" value="ECO:0000318"/>
    <property type="project" value="GO_Central"/>
</dbReference>
<dbReference type="CDD" id="cd07957">
    <property type="entry name" value="Anticodon_Ia_Met"/>
    <property type="match status" value="1"/>
</dbReference>
<dbReference type="CDD" id="cd00814">
    <property type="entry name" value="MetRS_core"/>
    <property type="match status" value="1"/>
</dbReference>
<dbReference type="FunFam" id="1.10.730.10:FF:000035">
    <property type="entry name" value="Methionine--tRNA ligase"/>
    <property type="match status" value="1"/>
</dbReference>
<dbReference type="FunFam" id="2.170.220.10:FF:000002">
    <property type="entry name" value="Methionine--tRNA ligase"/>
    <property type="match status" value="1"/>
</dbReference>
<dbReference type="Gene3D" id="2.170.220.10">
    <property type="match status" value="1"/>
</dbReference>
<dbReference type="Gene3D" id="3.40.50.620">
    <property type="entry name" value="HUPs"/>
    <property type="match status" value="1"/>
</dbReference>
<dbReference type="Gene3D" id="1.10.730.10">
    <property type="entry name" value="Isoleucyl-tRNA Synthetase, Domain 1"/>
    <property type="match status" value="1"/>
</dbReference>
<dbReference type="HAMAP" id="MF_01228">
    <property type="entry name" value="Met_tRNA_synth_type2"/>
    <property type="match status" value="1"/>
</dbReference>
<dbReference type="InterPro" id="IPR001412">
    <property type="entry name" value="aa-tRNA-synth_I_CS"/>
</dbReference>
<dbReference type="InterPro" id="IPR041872">
    <property type="entry name" value="Anticodon_Met"/>
</dbReference>
<dbReference type="InterPro" id="IPR014758">
    <property type="entry name" value="Met-tRNA_synth"/>
</dbReference>
<dbReference type="InterPro" id="IPR023457">
    <property type="entry name" value="Met-tRNA_synth_2"/>
</dbReference>
<dbReference type="InterPro" id="IPR015413">
    <property type="entry name" value="Methionyl/Leucyl_tRNA_Synth"/>
</dbReference>
<dbReference type="InterPro" id="IPR033911">
    <property type="entry name" value="MetRS_core"/>
</dbReference>
<dbReference type="InterPro" id="IPR014729">
    <property type="entry name" value="Rossmann-like_a/b/a_fold"/>
</dbReference>
<dbReference type="InterPro" id="IPR009080">
    <property type="entry name" value="tRNAsynth_Ia_anticodon-bd"/>
</dbReference>
<dbReference type="NCBIfam" id="TIGR00398">
    <property type="entry name" value="metG"/>
    <property type="match status" value="1"/>
</dbReference>
<dbReference type="NCBIfam" id="NF008900">
    <property type="entry name" value="PRK12267.1"/>
    <property type="match status" value="1"/>
</dbReference>
<dbReference type="PANTHER" id="PTHR43326:SF1">
    <property type="entry name" value="METHIONINE--TRNA LIGASE, MITOCHONDRIAL"/>
    <property type="match status" value="1"/>
</dbReference>
<dbReference type="PANTHER" id="PTHR43326">
    <property type="entry name" value="METHIONYL-TRNA SYNTHETASE"/>
    <property type="match status" value="1"/>
</dbReference>
<dbReference type="Pfam" id="PF19303">
    <property type="entry name" value="Anticodon_3"/>
    <property type="match status" value="1"/>
</dbReference>
<dbReference type="Pfam" id="PF09334">
    <property type="entry name" value="tRNA-synt_1g"/>
    <property type="match status" value="2"/>
</dbReference>
<dbReference type="PRINTS" id="PR01041">
    <property type="entry name" value="TRNASYNTHMET"/>
</dbReference>
<dbReference type="SUPFAM" id="SSF47323">
    <property type="entry name" value="Anticodon-binding domain of a subclass of class I aminoacyl-tRNA synthetases"/>
    <property type="match status" value="1"/>
</dbReference>
<dbReference type="SUPFAM" id="SSF52374">
    <property type="entry name" value="Nucleotidylyl transferase"/>
    <property type="match status" value="1"/>
</dbReference>
<dbReference type="PROSITE" id="PS00178">
    <property type="entry name" value="AA_TRNA_LIGASE_I"/>
    <property type="match status" value="1"/>
</dbReference>
<evidence type="ECO:0000250" key="1"/>
<evidence type="ECO:0000255" key="2">
    <source>
        <dbReference type="HAMAP-Rule" id="MF_01228"/>
    </source>
</evidence>
<evidence type="ECO:0000256" key="3">
    <source>
        <dbReference type="SAM" id="MobiDB-lite"/>
    </source>
</evidence>
<evidence type="ECO:0000269" key="4">
    <source>
    </source>
</evidence>
<evidence type="ECO:0000303" key="5">
    <source>
    </source>
</evidence>
<evidence type="ECO:0007829" key="6">
    <source>
        <dbReference type="PDB" id="6AX8"/>
    </source>
</evidence>
<sequence length="519" mass="58093">MKPYYVTTAIAYPNAAPHVGHAYEYIATDAIARFKRLDRYDVRFLTGTDEHGLKVAQAAAAAGVPTAALARRNSDVFQRMQEALNISFDRFIRTTDADHHEASKELWRRMSAAGDIYLDNYSGWYSVRDERFFVESETQLVDGTRLTVETGTPVTWTEEQTYFFRLSAYTDKLLAHYHANPDFIAPETRRNEVISFVSGGLDDLSISRTSFDWGVQVPEHPDHVMYVWVDALTNYLTGAGFPDTDSELFRRYWPADLHMIGKDIIRFHAVYWPAFLMSAGIELPRRIFAHGFLHNRGEKMSKSVGNIVDPVALAEALGVDQVRYFLLREVPFGQDGSYSDEAIVTRINTDLANELGNLAQRSLSMVAKNLDGRVPNPGEFADADAALLATADGLLERVRGHFDAQAMHLALEAIWLMLGDANKYFSVQQPWVLRKSESEADQARFRTTLYVTCEVVRIAALLIQPVMPESAGKILDLLGQAPNQRSFAAVGVRLTPGTALPPPTGVFPRYQPPQPPEGK</sequence>
<keyword id="KW-0002">3D-structure</keyword>
<keyword id="KW-0030">Aminoacyl-tRNA synthetase</keyword>
<keyword id="KW-0067">ATP-binding</keyword>
<keyword id="KW-0963">Cytoplasm</keyword>
<keyword id="KW-0436">Ligase</keyword>
<keyword id="KW-0547">Nucleotide-binding</keyword>
<keyword id="KW-0648">Protein biosynthesis</keyword>
<keyword id="KW-1185">Reference proteome</keyword>
<comment type="function">
    <text evidence="2 4">Is required not only for elongation of protein synthesis but also for the initiation of all mRNA translation through initiator tRNA(fMet) aminoacylation.</text>
</comment>
<comment type="catalytic activity">
    <reaction evidence="2 4">
        <text>tRNA(Met) + L-methionine + ATP = L-methionyl-tRNA(Met) + AMP + diphosphate</text>
        <dbReference type="Rhea" id="RHEA:13481"/>
        <dbReference type="Rhea" id="RHEA-COMP:9667"/>
        <dbReference type="Rhea" id="RHEA-COMP:9698"/>
        <dbReference type="ChEBI" id="CHEBI:30616"/>
        <dbReference type="ChEBI" id="CHEBI:33019"/>
        <dbReference type="ChEBI" id="CHEBI:57844"/>
        <dbReference type="ChEBI" id="CHEBI:78442"/>
        <dbReference type="ChEBI" id="CHEBI:78530"/>
        <dbReference type="ChEBI" id="CHEBI:456215"/>
        <dbReference type="EC" id="6.1.1.10"/>
    </reaction>
    <physiologicalReaction direction="left-to-right" evidence="4">
        <dbReference type="Rhea" id="RHEA:13482"/>
    </physiologicalReaction>
</comment>
<comment type="biophysicochemical properties">
    <kinetics>
        <KM evidence="4">3.2 uM for E.coli tRNAfMet</KM>
        <text evidence="4">kcat is 2.83 sec(-1) with E.coli tRNAfMet as substrate.</text>
    </kinetics>
</comment>
<comment type="subunit">
    <text evidence="2 4">Monomer.</text>
</comment>
<comment type="subcellular location">
    <subcellularLocation>
        <location evidence="2">Cytoplasm</location>
    </subcellularLocation>
</comment>
<comment type="domain">
    <text evidence="4">Lacks the Zn(2+) binding motif and the C-terminal dimerization appendix that are found in MetRSs from several organisms including E.coli MetRS.</text>
</comment>
<comment type="similarity">
    <text evidence="2">Belongs to the class-I aminoacyl-tRNA synthetase family. MetG type 2B subfamily.</text>
</comment>
<name>SYM_MYCTU</name>
<organism>
    <name type="scientific">Mycobacterium tuberculosis (strain ATCC 25618 / H37Rv)</name>
    <dbReference type="NCBI Taxonomy" id="83332"/>
    <lineage>
        <taxon>Bacteria</taxon>
        <taxon>Bacillati</taxon>
        <taxon>Actinomycetota</taxon>
        <taxon>Actinomycetes</taxon>
        <taxon>Mycobacteriales</taxon>
        <taxon>Mycobacteriaceae</taxon>
        <taxon>Mycobacterium</taxon>
        <taxon>Mycobacterium tuberculosis complex</taxon>
    </lineage>
</organism>